<feature type="chain" id="PRO_1000097279" description="Lipoprotein signal peptidase">
    <location>
        <begin position="1"/>
        <end position="166"/>
    </location>
</feature>
<feature type="transmembrane region" description="Helical" evidence="1">
    <location>
        <begin position="12"/>
        <end position="32"/>
    </location>
</feature>
<feature type="transmembrane region" description="Helical" evidence="1">
    <location>
        <begin position="70"/>
        <end position="90"/>
    </location>
</feature>
<feature type="transmembrane region" description="Helical" evidence="1">
    <location>
        <begin position="102"/>
        <end position="122"/>
    </location>
</feature>
<feature type="transmembrane region" description="Helical" evidence="1">
    <location>
        <begin position="137"/>
        <end position="157"/>
    </location>
</feature>
<feature type="active site" evidence="1">
    <location>
        <position position="123"/>
    </location>
</feature>
<feature type="active site" evidence="1">
    <location>
        <position position="141"/>
    </location>
</feature>
<name>LSPA_SALPK</name>
<evidence type="ECO:0000255" key="1">
    <source>
        <dbReference type="HAMAP-Rule" id="MF_00161"/>
    </source>
</evidence>
<accession>B5BLL1</accession>
<protein>
    <recommendedName>
        <fullName evidence="1">Lipoprotein signal peptidase</fullName>
        <ecNumber evidence="1">3.4.23.36</ecNumber>
    </recommendedName>
    <alternativeName>
        <fullName evidence="1">Prolipoprotein signal peptidase</fullName>
    </alternativeName>
    <alternativeName>
        <fullName evidence="1">Signal peptidase II</fullName>
        <shortName evidence="1">SPase II</shortName>
    </alternativeName>
</protein>
<reference key="1">
    <citation type="journal article" date="2009" name="BMC Genomics">
        <title>Pseudogene accumulation in the evolutionary histories of Salmonella enterica serovars Paratyphi A and Typhi.</title>
        <authorList>
            <person name="Holt K.E."/>
            <person name="Thomson N.R."/>
            <person name="Wain J."/>
            <person name="Langridge G.C."/>
            <person name="Hasan R."/>
            <person name="Bhutta Z.A."/>
            <person name="Quail M.A."/>
            <person name="Norbertczak H."/>
            <person name="Walker D."/>
            <person name="Simmonds M."/>
            <person name="White B."/>
            <person name="Bason N."/>
            <person name="Mungall K."/>
            <person name="Dougan G."/>
            <person name="Parkhill J."/>
        </authorList>
    </citation>
    <scope>NUCLEOTIDE SEQUENCE [LARGE SCALE GENOMIC DNA]</scope>
    <source>
        <strain>AKU_12601</strain>
    </source>
</reference>
<keyword id="KW-0064">Aspartyl protease</keyword>
<keyword id="KW-0997">Cell inner membrane</keyword>
<keyword id="KW-1003">Cell membrane</keyword>
<keyword id="KW-0378">Hydrolase</keyword>
<keyword id="KW-0472">Membrane</keyword>
<keyword id="KW-0645">Protease</keyword>
<keyword id="KW-0812">Transmembrane</keyword>
<keyword id="KW-1133">Transmembrane helix</keyword>
<proteinExistence type="inferred from homology"/>
<comment type="function">
    <text evidence="1">This protein specifically catalyzes the removal of signal peptides from prolipoproteins.</text>
</comment>
<comment type="catalytic activity">
    <reaction evidence="1">
        <text>Release of signal peptides from bacterial membrane prolipoproteins. Hydrolyzes -Xaa-Yaa-Zaa-|-(S,diacylglyceryl)Cys-, in which Xaa is hydrophobic (preferably Leu), and Yaa (Ala or Ser) and Zaa (Gly or Ala) have small, neutral side chains.</text>
        <dbReference type="EC" id="3.4.23.36"/>
    </reaction>
</comment>
<comment type="pathway">
    <text evidence="1">Protein modification; lipoprotein biosynthesis (signal peptide cleavage).</text>
</comment>
<comment type="subcellular location">
    <subcellularLocation>
        <location evidence="1">Cell inner membrane</location>
        <topology evidence="1">Multi-pass membrane protein</topology>
    </subcellularLocation>
</comment>
<comment type="similarity">
    <text evidence="1">Belongs to the peptidase A8 family.</text>
</comment>
<dbReference type="EC" id="3.4.23.36" evidence="1"/>
<dbReference type="EMBL" id="FM200053">
    <property type="protein sequence ID" value="CAR58155.1"/>
    <property type="molecule type" value="Genomic_DNA"/>
</dbReference>
<dbReference type="RefSeq" id="WP_000042738.1">
    <property type="nucleotide sequence ID" value="NC_011147.1"/>
</dbReference>
<dbReference type="SMR" id="B5BLL1"/>
<dbReference type="MEROPS" id="A08.001"/>
<dbReference type="KEGG" id="sek:SSPA0044"/>
<dbReference type="HOGENOM" id="CLU_083252_4_0_6"/>
<dbReference type="UniPathway" id="UPA00665"/>
<dbReference type="Proteomes" id="UP000001869">
    <property type="component" value="Chromosome"/>
</dbReference>
<dbReference type="GO" id="GO:0005886">
    <property type="term" value="C:plasma membrane"/>
    <property type="evidence" value="ECO:0007669"/>
    <property type="project" value="UniProtKB-SubCell"/>
</dbReference>
<dbReference type="GO" id="GO:0004190">
    <property type="term" value="F:aspartic-type endopeptidase activity"/>
    <property type="evidence" value="ECO:0007669"/>
    <property type="project" value="UniProtKB-UniRule"/>
</dbReference>
<dbReference type="GO" id="GO:0006508">
    <property type="term" value="P:proteolysis"/>
    <property type="evidence" value="ECO:0007669"/>
    <property type="project" value="UniProtKB-KW"/>
</dbReference>
<dbReference type="HAMAP" id="MF_00161">
    <property type="entry name" value="LspA"/>
    <property type="match status" value="1"/>
</dbReference>
<dbReference type="InterPro" id="IPR001872">
    <property type="entry name" value="Peptidase_A8"/>
</dbReference>
<dbReference type="NCBIfam" id="TIGR00077">
    <property type="entry name" value="lspA"/>
    <property type="match status" value="1"/>
</dbReference>
<dbReference type="PANTHER" id="PTHR33695">
    <property type="entry name" value="LIPOPROTEIN SIGNAL PEPTIDASE"/>
    <property type="match status" value="1"/>
</dbReference>
<dbReference type="PANTHER" id="PTHR33695:SF1">
    <property type="entry name" value="LIPOPROTEIN SIGNAL PEPTIDASE"/>
    <property type="match status" value="1"/>
</dbReference>
<dbReference type="Pfam" id="PF01252">
    <property type="entry name" value="Peptidase_A8"/>
    <property type="match status" value="1"/>
</dbReference>
<dbReference type="PRINTS" id="PR00781">
    <property type="entry name" value="LIPOSIGPTASE"/>
</dbReference>
<dbReference type="PROSITE" id="PS00855">
    <property type="entry name" value="SPASE_II"/>
    <property type="match status" value="1"/>
</dbReference>
<organism>
    <name type="scientific">Salmonella paratyphi A (strain AKU_12601)</name>
    <dbReference type="NCBI Taxonomy" id="554290"/>
    <lineage>
        <taxon>Bacteria</taxon>
        <taxon>Pseudomonadati</taxon>
        <taxon>Pseudomonadota</taxon>
        <taxon>Gammaproteobacteria</taxon>
        <taxon>Enterobacterales</taxon>
        <taxon>Enterobacteriaceae</taxon>
        <taxon>Salmonella</taxon>
    </lineage>
</organism>
<sequence>MSKPLCSTGLRWLWLVVVVLIIDLGSKYLILQNFALGDTVGLFPSLNLHYARNYGAAFSFLADSGGWQRWFFAGIAIGICVILLVMMYRSKATQKLNNIAYALIIGGALGNLFDRLWHGFVVDMIDFYVGDWHFATFNLADTAICIGAALIVLEGFLPKPTAKEQA</sequence>
<gene>
    <name evidence="1" type="primary">lspA</name>
    <name type="ordered locus">SSPA0044</name>
</gene>